<organism>
    <name type="scientific">Pseudomonas savastanoi pv. phaseolicola (strain 1448A / Race 6)</name>
    <name type="common">Pseudomonas syringae pv. phaseolicola (strain 1448A / Race 6)</name>
    <dbReference type="NCBI Taxonomy" id="264730"/>
    <lineage>
        <taxon>Bacteria</taxon>
        <taxon>Pseudomonadati</taxon>
        <taxon>Pseudomonadota</taxon>
        <taxon>Gammaproteobacteria</taxon>
        <taxon>Pseudomonadales</taxon>
        <taxon>Pseudomonadaceae</taxon>
        <taxon>Pseudomonas</taxon>
    </lineage>
</organism>
<accession>Q48M15</accession>
<comment type="function">
    <text evidence="1">Transfers and isomerizes the ribose moiety from AdoMet to the 7-aminomethyl group of 7-deazaguanine (preQ1-tRNA) to give epoxyqueuosine (oQ-tRNA).</text>
</comment>
<comment type="catalytic activity">
    <reaction evidence="1">
        <text>7-aminomethyl-7-carbaguanosine(34) in tRNA + S-adenosyl-L-methionine = epoxyqueuosine(34) in tRNA + adenine + L-methionine + 2 H(+)</text>
        <dbReference type="Rhea" id="RHEA:32155"/>
        <dbReference type="Rhea" id="RHEA-COMP:10342"/>
        <dbReference type="Rhea" id="RHEA-COMP:18582"/>
        <dbReference type="ChEBI" id="CHEBI:15378"/>
        <dbReference type="ChEBI" id="CHEBI:16708"/>
        <dbReference type="ChEBI" id="CHEBI:57844"/>
        <dbReference type="ChEBI" id="CHEBI:59789"/>
        <dbReference type="ChEBI" id="CHEBI:82833"/>
        <dbReference type="ChEBI" id="CHEBI:194443"/>
        <dbReference type="EC" id="2.4.99.17"/>
    </reaction>
</comment>
<comment type="pathway">
    <text evidence="1">tRNA modification; tRNA-queuosine biosynthesis.</text>
</comment>
<comment type="subunit">
    <text evidence="1">Monomer.</text>
</comment>
<comment type="subcellular location">
    <subcellularLocation>
        <location evidence="1">Cytoplasm</location>
    </subcellularLocation>
</comment>
<comment type="similarity">
    <text evidence="1">Belongs to the QueA family.</text>
</comment>
<evidence type="ECO:0000255" key="1">
    <source>
        <dbReference type="HAMAP-Rule" id="MF_00113"/>
    </source>
</evidence>
<gene>
    <name evidence="1" type="primary">queA</name>
    <name type="ordered locus">PSPPH_1299</name>
</gene>
<sequence>MRVADFTFELPDSLIARHPLAERRSSRLLTLDGPTGALAHRQFTDLLEHLRPGDLMVFNNTRVIPARLFGQKASGGKLEILVERVLDSHRVLAHVRSSKSPKPGSSILIDGGGEAEMVARHHALFELRFAEEVLPLLERVGHMPLPPYIDRPDEGADRERYQTVYAQRAGAVAAPTAGLHFDQPLLEAIAAKGVETAFVTLHVGAGTFQPVRVEQIEDHHMHSEWLEVGQDVVDAVAACRARGGRVIAVGTTSVRSLESAARDGELKSFSGDTDIFIYPGRPFHVVDALVTNFHLPESTLLMLVSAFAGYPETMAAYAGAIEHGYRFFSYGDAMFITRNPAPTAPQESAPEDHA</sequence>
<name>QUEA_PSE14</name>
<protein>
    <recommendedName>
        <fullName evidence="1">S-adenosylmethionine:tRNA ribosyltransferase-isomerase</fullName>
        <ecNumber evidence="1">2.4.99.17</ecNumber>
    </recommendedName>
    <alternativeName>
        <fullName evidence="1">Queuosine biosynthesis protein QueA</fullName>
    </alternativeName>
</protein>
<dbReference type="EC" id="2.4.99.17" evidence="1"/>
<dbReference type="EMBL" id="CP000058">
    <property type="protein sequence ID" value="AAZ34127.1"/>
    <property type="molecule type" value="Genomic_DNA"/>
</dbReference>
<dbReference type="RefSeq" id="WP_011167997.1">
    <property type="nucleotide sequence ID" value="NC_005773.3"/>
</dbReference>
<dbReference type="SMR" id="Q48M15"/>
<dbReference type="KEGG" id="psp:PSPPH_1299"/>
<dbReference type="eggNOG" id="COG0809">
    <property type="taxonomic scope" value="Bacteria"/>
</dbReference>
<dbReference type="HOGENOM" id="CLU_039110_1_0_6"/>
<dbReference type="UniPathway" id="UPA00392"/>
<dbReference type="Proteomes" id="UP000000551">
    <property type="component" value="Chromosome"/>
</dbReference>
<dbReference type="GO" id="GO:0005737">
    <property type="term" value="C:cytoplasm"/>
    <property type="evidence" value="ECO:0007669"/>
    <property type="project" value="UniProtKB-SubCell"/>
</dbReference>
<dbReference type="GO" id="GO:0051075">
    <property type="term" value="F:S-adenosylmethionine:tRNA ribosyltransferase-isomerase activity"/>
    <property type="evidence" value="ECO:0007669"/>
    <property type="project" value="UniProtKB-EC"/>
</dbReference>
<dbReference type="GO" id="GO:0008616">
    <property type="term" value="P:queuosine biosynthetic process"/>
    <property type="evidence" value="ECO:0007669"/>
    <property type="project" value="UniProtKB-UniRule"/>
</dbReference>
<dbReference type="GO" id="GO:0002099">
    <property type="term" value="P:tRNA wobble guanine modification"/>
    <property type="evidence" value="ECO:0007669"/>
    <property type="project" value="TreeGrafter"/>
</dbReference>
<dbReference type="FunFam" id="2.40.10.240:FF:000001">
    <property type="entry name" value="S-adenosylmethionine:tRNA ribosyltransferase-isomerase"/>
    <property type="match status" value="1"/>
</dbReference>
<dbReference type="FunFam" id="3.40.1780.10:FF:000001">
    <property type="entry name" value="S-adenosylmethionine:tRNA ribosyltransferase-isomerase"/>
    <property type="match status" value="1"/>
</dbReference>
<dbReference type="Gene3D" id="2.40.10.240">
    <property type="entry name" value="QueA-like"/>
    <property type="match status" value="1"/>
</dbReference>
<dbReference type="Gene3D" id="3.40.1780.10">
    <property type="entry name" value="QueA-like"/>
    <property type="match status" value="1"/>
</dbReference>
<dbReference type="HAMAP" id="MF_00113">
    <property type="entry name" value="QueA"/>
    <property type="match status" value="1"/>
</dbReference>
<dbReference type="InterPro" id="IPR003699">
    <property type="entry name" value="QueA"/>
</dbReference>
<dbReference type="InterPro" id="IPR042118">
    <property type="entry name" value="QueA_dom1"/>
</dbReference>
<dbReference type="InterPro" id="IPR042119">
    <property type="entry name" value="QueA_dom2"/>
</dbReference>
<dbReference type="InterPro" id="IPR036100">
    <property type="entry name" value="QueA_sf"/>
</dbReference>
<dbReference type="NCBIfam" id="NF001140">
    <property type="entry name" value="PRK00147.1"/>
    <property type="match status" value="1"/>
</dbReference>
<dbReference type="NCBIfam" id="TIGR00113">
    <property type="entry name" value="queA"/>
    <property type="match status" value="1"/>
</dbReference>
<dbReference type="PANTHER" id="PTHR30307">
    <property type="entry name" value="S-ADENOSYLMETHIONINE:TRNA RIBOSYLTRANSFERASE-ISOMERASE"/>
    <property type="match status" value="1"/>
</dbReference>
<dbReference type="PANTHER" id="PTHR30307:SF0">
    <property type="entry name" value="S-ADENOSYLMETHIONINE:TRNA RIBOSYLTRANSFERASE-ISOMERASE"/>
    <property type="match status" value="1"/>
</dbReference>
<dbReference type="Pfam" id="PF02547">
    <property type="entry name" value="Queuosine_synth"/>
    <property type="match status" value="1"/>
</dbReference>
<dbReference type="SUPFAM" id="SSF111337">
    <property type="entry name" value="QueA-like"/>
    <property type="match status" value="1"/>
</dbReference>
<reference key="1">
    <citation type="journal article" date="2005" name="J. Bacteriol.">
        <title>Whole-genome sequence analysis of Pseudomonas syringae pv. phaseolicola 1448A reveals divergence among pathovars in genes involved in virulence and transposition.</title>
        <authorList>
            <person name="Joardar V."/>
            <person name="Lindeberg M."/>
            <person name="Jackson R.W."/>
            <person name="Selengut J."/>
            <person name="Dodson R."/>
            <person name="Brinkac L.M."/>
            <person name="Daugherty S.C."/>
            <person name="DeBoy R.T."/>
            <person name="Durkin A.S."/>
            <person name="Gwinn Giglio M."/>
            <person name="Madupu R."/>
            <person name="Nelson W.C."/>
            <person name="Rosovitz M.J."/>
            <person name="Sullivan S.A."/>
            <person name="Crabtree J."/>
            <person name="Creasy T."/>
            <person name="Davidsen T.M."/>
            <person name="Haft D.H."/>
            <person name="Zafar N."/>
            <person name="Zhou L."/>
            <person name="Halpin R."/>
            <person name="Holley T."/>
            <person name="Khouri H.M."/>
            <person name="Feldblyum T.V."/>
            <person name="White O."/>
            <person name="Fraser C.M."/>
            <person name="Chatterjee A.K."/>
            <person name="Cartinhour S."/>
            <person name="Schneider D."/>
            <person name="Mansfield J.W."/>
            <person name="Collmer A."/>
            <person name="Buell R."/>
        </authorList>
    </citation>
    <scope>NUCLEOTIDE SEQUENCE [LARGE SCALE GENOMIC DNA]</scope>
    <source>
        <strain>1448A / Race 6</strain>
    </source>
</reference>
<proteinExistence type="inferred from homology"/>
<feature type="chain" id="PRO_0000231361" description="S-adenosylmethionine:tRNA ribosyltransferase-isomerase">
    <location>
        <begin position="1"/>
        <end position="354"/>
    </location>
</feature>
<keyword id="KW-0963">Cytoplasm</keyword>
<keyword id="KW-0671">Queuosine biosynthesis</keyword>
<keyword id="KW-0949">S-adenosyl-L-methionine</keyword>
<keyword id="KW-0808">Transferase</keyword>